<accession>Q9IFX2</accession>
<protein>
    <recommendedName>
        <fullName>Non-structural polyprotein 1AB</fullName>
    </recommendedName>
    <component>
        <recommendedName>
            <fullName evidence="7">Protein p19</fullName>
        </recommendedName>
    </component>
    <component>
        <recommendedName>
            <fullName>Transmembrane protein 1A</fullName>
        </recommendedName>
    </component>
    <component>
        <recommendedName>
            <fullName>Serine protease p27</fullName>
            <shortName evidence="7">p27</shortName>
            <ecNumber evidence="2">3.4.21.-</ecNumber>
        </recommendedName>
    </component>
    <component>
        <recommendedName>
            <fullName>Viral genome-linked protein</fullName>
        </recommendedName>
        <alternativeName>
            <fullName>VPg</fullName>
        </alternativeName>
    </component>
    <component>
        <recommendedName>
            <fullName evidence="7">Protein p20</fullName>
        </recommendedName>
    </component>
    <component>
        <recommendedName>
            <fullName>RNA-directed RNA polymerase p57</fullName>
            <shortName evidence="7">p57</shortName>
            <ecNumber>2.7.7.48</ecNumber>
        </recommendedName>
    </component>
</protein>
<comment type="function">
    <molecule>Serine protease p27</molecule>
    <text evidence="2">Responsible for the cleavage of the polyprotein into functional products.</text>
</comment>
<comment type="function">
    <molecule>Viral genome-linked protein</molecule>
    <text evidence="3">Protein covalently attached to the 5' extremity of the genomic and subgenomic RNAs (By similarity). It may serve as a primer for the replicase (By similarity).</text>
</comment>
<comment type="catalytic activity">
    <reaction evidence="5">
        <text>RNA(n) + a ribonucleoside 5'-triphosphate = RNA(n+1) + diphosphate</text>
        <dbReference type="Rhea" id="RHEA:21248"/>
        <dbReference type="Rhea" id="RHEA-COMP:14527"/>
        <dbReference type="Rhea" id="RHEA-COMP:17342"/>
        <dbReference type="ChEBI" id="CHEBI:33019"/>
        <dbReference type="ChEBI" id="CHEBI:61557"/>
        <dbReference type="ChEBI" id="CHEBI:140395"/>
        <dbReference type="EC" id="2.7.7.48"/>
    </reaction>
</comment>
<comment type="subunit">
    <molecule>Serine protease p27</molecule>
    <text evidence="2">Monomer.</text>
</comment>
<comment type="subcellular location">
    <molecule>Transmembrane protein 1A</molecule>
    <subcellularLocation>
        <location evidence="8">Host membrane</location>
        <topology evidence="8">Multi-pass membrane protein</topology>
    </subcellularLocation>
</comment>
<comment type="alternative products">
    <event type="ribosomal frameshifting"/>
    <isoform>
        <id>Q9IFX2-1</id>
        <name>nsp1ab</name>
        <sequence type="displayed"/>
    </isoform>
    <isoform>
        <id>Q9IFX3-1</id>
        <name>nsp1a</name>
        <sequence type="external"/>
    </isoform>
</comment>
<comment type="PTM">
    <text evidence="2 9 10">Cleaved by the viral and host proteases (Probable). The protease is probably autocatalytically cleaved (By similarity).</text>
</comment>
<comment type="miscellaneous">
    <molecule>Isoform nsp1ab</molecule>
    <text>Generated by a ribosomal frameshift at position 900.</text>
</comment>
<comment type="similarity">
    <text evidence="8">Belongs to the astroviridae polyprotein 1AB family.</text>
</comment>
<keyword id="KW-0067">ATP-binding</keyword>
<keyword id="KW-0175">Coiled coil</keyword>
<keyword id="KW-0191">Covalent protein-RNA linkage</keyword>
<keyword id="KW-1043">Host membrane</keyword>
<keyword id="KW-0378">Hydrolase</keyword>
<keyword id="KW-0472">Membrane</keyword>
<keyword id="KW-0547">Nucleotide-binding</keyword>
<keyword id="KW-0548">Nucleotidyltransferase</keyword>
<keyword id="KW-0597">Phosphoprotein</keyword>
<keyword id="KW-0645">Protease</keyword>
<keyword id="KW-0688">Ribosomal frameshifting</keyword>
<keyword id="KW-0696">RNA-directed RNA polymerase</keyword>
<keyword id="KW-0720">Serine protease</keyword>
<keyword id="KW-0808">Transferase</keyword>
<keyword id="KW-0812">Transmembrane</keyword>
<keyword id="KW-1133">Transmembrane helix</keyword>
<keyword id="KW-0693">Viral RNA replication</keyword>
<dbReference type="EC" id="3.4.21.-" evidence="2"/>
<dbReference type="EC" id="2.7.7.48"/>
<dbReference type="EMBL" id="AF260508">
    <property type="protein sequence ID" value="AAF85963.1"/>
    <property type="status" value="ALT_SEQ"/>
    <property type="molecule type" value="Genomic_RNA"/>
</dbReference>
<dbReference type="PIR" id="C49529">
    <property type="entry name" value="C49529"/>
</dbReference>
<dbReference type="IntAct" id="Q9IFX2">
    <property type="interactions" value="1"/>
</dbReference>
<dbReference type="Proteomes" id="UP000008629">
    <property type="component" value="Genome"/>
</dbReference>
<dbReference type="GO" id="GO:0033644">
    <property type="term" value="C:host cell membrane"/>
    <property type="evidence" value="ECO:0007669"/>
    <property type="project" value="UniProtKB-SubCell"/>
</dbReference>
<dbReference type="GO" id="GO:0016020">
    <property type="term" value="C:membrane"/>
    <property type="evidence" value="ECO:0007669"/>
    <property type="project" value="UniProtKB-KW"/>
</dbReference>
<dbReference type="GO" id="GO:0005524">
    <property type="term" value="F:ATP binding"/>
    <property type="evidence" value="ECO:0007669"/>
    <property type="project" value="UniProtKB-KW"/>
</dbReference>
<dbReference type="GO" id="GO:0003723">
    <property type="term" value="F:RNA binding"/>
    <property type="evidence" value="ECO:0007669"/>
    <property type="project" value="InterPro"/>
</dbReference>
<dbReference type="GO" id="GO:0003968">
    <property type="term" value="F:RNA-directed RNA polymerase activity"/>
    <property type="evidence" value="ECO:0007669"/>
    <property type="project" value="UniProtKB-KW"/>
</dbReference>
<dbReference type="GO" id="GO:0004252">
    <property type="term" value="F:serine-type endopeptidase activity"/>
    <property type="evidence" value="ECO:0007669"/>
    <property type="project" value="InterPro"/>
</dbReference>
<dbReference type="GO" id="GO:0070008">
    <property type="term" value="F:serine-type exopeptidase activity"/>
    <property type="evidence" value="ECO:0007669"/>
    <property type="project" value="InterPro"/>
</dbReference>
<dbReference type="GO" id="GO:0006351">
    <property type="term" value="P:DNA-templated transcription"/>
    <property type="evidence" value="ECO:0007669"/>
    <property type="project" value="InterPro"/>
</dbReference>
<dbReference type="GO" id="GO:0006508">
    <property type="term" value="P:proteolysis"/>
    <property type="evidence" value="ECO:0007669"/>
    <property type="project" value="UniProtKB-KW"/>
</dbReference>
<dbReference type="GO" id="GO:0039694">
    <property type="term" value="P:viral RNA genome replication"/>
    <property type="evidence" value="ECO:0007669"/>
    <property type="project" value="InterPro"/>
</dbReference>
<dbReference type="GO" id="GO:0075523">
    <property type="term" value="P:viral translational frameshifting"/>
    <property type="evidence" value="ECO:0007669"/>
    <property type="project" value="UniProtKB-KW"/>
</dbReference>
<dbReference type="CDD" id="cd23172">
    <property type="entry name" value="ps-ssRNAv_Astroviridae_RdRp"/>
    <property type="match status" value="1"/>
</dbReference>
<dbReference type="Gene3D" id="3.30.70.270">
    <property type="match status" value="1"/>
</dbReference>
<dbReference type="Gene3D" id="2.40.10.10">
    <property type="entry name" value="Trypsin-like serine proteases"/>
    <property type="match status" value="2"/>
</dbReference>
<dbReference type="InterPro" id="IPR045835">
    <property type="entry name" value="Astro_1A"/>
</dbReference>
<dbReference type="InterPro" id="IPR045833">
    <property type="entry name" value="Astro_p19"/>
</dbReference>
<dbReference type="InterPro" id="IPR045836">
    <property type="entry name" value="Astro_VPg"/>
</dbReference>
<dbReference type="InterPro" id="IPR043502">
    <property type="entry name" value="DNA/RNA_pol_sf"/>
</dbReference>
<dbReference type="InterPro" id="IPR022068">
    <property type="entry name" value="Mamastrovirus_p20"/>
</dbReference>
<dbReference type="InterPro" id="IPR009003">
    <property type="entry name" value="Peptidase_S1_PA"/>
</dbReference>
<dbReference type="InterPro" id="IPR043504">
    <property type="entry name" value="Peptidase_S1_PA_chymotrypsin"/>
</dbReference>
<dbReference type="InterPro" id="IPR043128">
    <property type="entry name" value="Rev_trsase/Diguanyl_cyclase"/>
</dbReference>
<dbReference type="InterPro" id="IPR001205">
    <property type="entry name" value="RNA-dir_pol_C"/>
</dbReference>
<dbReference type="InterPro" id="IPR007094">
    <property type="entry name" value="RNA-dir_pol_PSvirus"/>
</dbReference>
<dbReference type="Pfam" id="PF19415">
    <property type="entry name" value="Astro_1A"/>
    <property type="match status" value="1"/>
</dbReference>
<dbReference type="Pfam" id="PF19414">
    <property type="entry name" value="Astro_p19"/>
    <property type="match status" value="1"/>
</dbReference>
<dbReference type="Pfam" id="PF19416">
    <property type="entry name" value="Astro_VPg"/>
    <property type="match status" value="1"/>
</dbReference>
<dbReference type="Pfam" id="PF12285">
    <property type="entry name" value="Astrovir_pp_1"/>
    <property type="match status" value="1"/>
</dbReference>
<dbReference type="Pfam" id="PF00680">
    <property type="entry name" value="RdRP_1"/>
    <property type="match status" value="1"/>
</dbReference>
<dbReference type="Pfam" id="PF13365">
    <property type="entry name" value="Trypsin_2"/>
    <property type="match status" value="1"/>
</dbReference>
<dbReference type="SUPFAM" id="SSF56672">
    <property type="entry name" value="DNA/RNA polymerases"/>
    <property type="match status" value="1"/>
</dbReference>
<dbReference type="SUPFAM" id="SSF50494">
    <property type="entry name" value="Trypsin-like serine proteases"/>
    <property type="match status" value="1"/>
</dbReference>
<dbReference type="PROSITE" id="PS50507">
    <property type="entry name" value="RDRP_SSRNA_POS"/>
    <property type="match status" value="1"/>
</dbReference>
<reference key="1">
    <citation type="journal article" date="2000" name="J. Gen. Virol.">
        <title>Molecular analysis of a serotype 8 human astrovirus genome.</title>
        <authorList>
            <person name="Mendez-Toss M."/>
            <person name="Romero-Guido P."/>
            <person name="Munguia M.E."/>
            <person name="Mendez E."/>
            <person name="Arias C.F."/>
        </authorList>
    </citation>
    <scope>NUCLEOTIDE SEQUENCE [GENOMIC RNA]</scope>
    <source>
        <strain>Yuc8</strain>
    </source>
</reference>
<reference key="2">
    <citation type="journal article" date="2002" name="J. Gen. Virol.">
        <title>Proteolytic processing of a human astrovirus nonstructural protein.</title>
        <authorList>
            <person name="Kiang D."/>
            <person name="Matsui S.M."/>
        </authorList>
    </citation>
    <scope>PROTEOLYTIC PROCESSING (NON-STRUCTURAL POLYPROTEIN 1A)</scope>
</reference>
<reference key="3">
    <citation type="journal article" date="2003" name="J. Virol.">
        <title>Protein products of the open reading frames encoding nonstructural proteins of human astrovirus serotype 8.</title>
        <authorList>
            <person name="Mendez E."/>
            <person name="Salas-Ocampo M.P."/>
            <person name="Munguia M.E."/>
            <person name="Arias C.F."/>
        </authorList>
    </citation>
    <scope>PROTEOLYTIC PROCESSING (NON-STRUCTURAL POLYPROTEIN 1A)</scope>
</reference>
<name>NS1AB_HASV8</name>
<evidence type="ECO:0000250" key="1"/>
<evidence type="ECO:0000250" key="2">
    <source>
        <dbReference type="UniProtKB" id="P0C6K4"/>
    </source>
</evidence>
<evidence type="ECO:0000250" key="3">
    <source>
        <dbReference type="UniProtKB" id="Q3ZN07"/>
    </source>
</evidence>
<evidence type="ECO:0000255" key="4"/>
<evidence type="ECO:0000255" key="5">
    <source>
        <dbReference type="PROSITE-ProRule" id="PRU00539"/>
    </source>
</evidence>
<evidence type="ECO:0000256" key="6">
    <source>
        <dbReference type="SAM" id="MobiDB-lite"/>
    </source>
</evidence>
<evidence type="ECO:0000303" key="7">
    <source>
    </source>
</evidence>
<evidence type="ECO:0000305" key="8"/>
<evidence type="ECO:0000305" key="9">
    <source>
    </source>
</evidence>
<evidence type="ECO:0000305" key="10">
    <source>
    </source>
</evidence>
<proteinExistence type="evidence at protein level"/>
<sequence length="1417" mass="161559">MMALGEPYYSSKPDKDFNFGSTMARRQMTPTMVTKLPKFVRNSPQAYDWIVRGLIFPTTGKTYFQRVVVITGGLEDGTYGSYAFNGSEWVEIYPIEHLNLMSSLKLIHKANALQERLRLSQEEKATLALDVQFLQHENVRLKELIPKPEPRKIQMKWIIVGAVLTFLSLIPGGYAQSQTNNTIFTDMIAACKYSTETLTENLDLRIKLALANITINDKLDAVRQILNFAFVPRAHWLRTVFYYIHYYEMWNIFMFVLAIGTVMRSARPGTDLITLATSHLSGFRMAVLPTIPFHTTMTLWVMNTLMVCYYFDNLLAITMAILAPILGIIFLCFMEDSNYVSQIRGLIATAVLIAGGHACLTLTGTTTSLFVVILTCRFIRMATVFIGTRFEIRDANGKVVATVPTRIKNVAFDFFQKLKQSGVRVGVNDFVVIKPGALCIIDTPEGKGTGFFSGNDIVTAAHVVGNNTFVSVCYEGLVYEAKVRYMPEKDIAFITCPGDLHPTARLKLSKNPDYSCVTVMAYVNEDLVVSTATAMVHGNTLSYAVRTQDGMSGAPVCDKYGRVLAVHQTNTGYTGGAVIIDPADFHPVKAPSQVELLKEEIERLKAQLNSAAENPVTVVTQQPIVTLEQKSVSDSDVVDLVRTAMEREMKVLRDEINGILAPFLQKKKGKTKHGRGRVRRNLRKGVKLLTEEEYRELLEKGLDRETFLDLIDRIIGERSGYPDYDDEDYYDEDDDGWGMVGDDVEFDYTEVINFDQAKPTPAPRTTKPKPCPEPKIEAQPLDLSQKKEKQPEHEQQVAKPTKPQKIEPQPYSQTYGKAPIWESYDFDWDEDDAKFILPAPHRLTKADEIVLGSKIVKLRTIIETAIKTQNYSALPEAVFELDKAAYEAGLEGFLQRVKSKKQGPKKLQRAPEDQGAQNYHSLDAWKSLLEPPRERRCVPANFPLLGHLPINRPIFDDKKPRDDLLGLLPEPTWHAFEEYGPTTWGPQAFVKSFDKFFYAEPIDFFSEYPQLCAFADWATYREFRYLEDTRVIHITATEKNTDSTPAYPKMNYFDTEEDYLEAHGWAPYIREFTRVFKGDKPEVLWYLFLKKEIIKEEKIRNSDIRQIVCADPIYTRIGACLEAHQNALMKQHTDTSVGQCGWSPMEGGFKKTMQRLVNKGNKHFIEFDWTRYDGTIPPALFKHIKEIRWNFINKDQREKYRHVHEWYVDNLLNRHVLLPSGEVTLQTRGNPSGQFSTPMDNNMVNFWLQAFEFAYFNGPDKDLWKTYDTVVYGDDRLSTTPSVPDNYEERVITMYRDIFGMWVKPGKVICRDSIVGLSFCGFTVNENLEPVPTSPEKLMASLLKPYKILPDLESLHGKLLCYQLLAAFMAEDHPFKVYVEHCLSRTAKQLRDSGLPARLTEEQLHRIWRGGPKKCDG</sequence>
<feature type="chain" id="PRO_0000327289" description="Non-structural polyprotein 1AB">
    <location>
        <begin position="1"/>
        <end position="1417"/>
    </location>
</feature>
<feature type="chain" id="PRO_0000327290" description="Protein p19" evidence="4">
    <location>
        <begin position="1"/>
        <end position="176"/>
    </location>
</feature>
<feature type="chain" id="PRO_0000327291" description="Transmembrane protein 1A" evidence="4">
    <location>
        <begin position="177"/>
        <end position="420"/>
    </location>
</feature>
<feature type="chain" id="PRO_0000327292" description="Serine protease p27" evidence="4">
    <location>
        <begin position="421"/>
        <end position="665"/>
    </location>
</feature>
<feature type="chain" id="PRO_0000419589" description="Viral genome-linked protein" evidence="4">
    <location>
        <begin position="666"/>
        <end position="756"/>
    </location>
</feature>
<feature type="chain" id="PRO_0000327293" description="Protein p20" evidence="4">
    <location>
        <begin position="757"/>
        <end position="914"/>
    </location>
</feature>
<feature type="chain" id="PRO_0000327294" description="RNA-directed RNA polymerase p57" evidence="4">
    <location>
        <begin position="915"/>
        <end position="1417"/>
    </location>
</feature>
<feature type="transmembrane region" description="Helical" evidence="4">
    <location>
        <begin position="155"/>
        <end position="175"/>
    </location>
</feature>
<feature type="transmembrane region" description="Helical" evidence="4">
    <location>
        <begin position="240"/>
        <end position="260"/>
    </location>
</feature>
<feature type="transmembrane region" description="Helical" evidence="4">
    <location>
        <begin position="287"/>
        <end position="307"/>
    </location>
</feature>
<feature type="transmembrane region" description="Helical" evidence="4">
    <location>
        <begin position="314"/>
        <end position="334"/>
    </location>
</feature>
<feature type="transmembrane region" description="Helical" evidence="4">
    <location>
        <begin position="345"/>
        <end position="365"/>
    </location>
</feature>
<feature type="domain" description="RdRp catalytic" evidence="5">
    <location>
        <begin position="1162"/>
        <end position="1288"/>
    </location>
</feature>
<feature type="region of interest" description="Disordered" evidence="6">
    <location>
        <begin position="753"/>
        <end position="813"/>
    </location>
</feature>
<feature type="coiled-coil region" evidence="4">
    <location>
        <begin position="105"/>
        <end position="143"/>
    </location>
</feature>
<feature type="coiled-coil region" evidence="4">
    <location>
        <begin position="588"/>
        <end position="615"/>
    </location>
</feature>
<feature type="compositionally biased region" description="Basic and acidic residues" evidence="6">
    <location>
        <begin position="784"/>
        <end position="796"/>
    </location>
</feature>
<feature type="active site" description="Charge relay system; for serine protease activity" evidence="1">
    <location>
        <position position="462"/>
    </location>
</feature>
<feature type="active site" description="Charge relay system; for serine protease activity" evidence="1">
    <location>
        <position position="490"/>
    </location>
</feature>
<feature type="active site" description="Charge relay system; for serine protease activity" evidence="1">
    <location>
        <position position="552"/>
    </location>
</feature>
<feature type="site" description="Cleavage" evidence="4">
    <location>
        <begin position="176"/>
        <end position="177"/>
    </location>
</feature>
<feature type="site" description="Cleavage" evidence="4">
    <location>
        <begin position="420"/>
        <end position="421"/>
    </location>
</feature>
<feature type="site" description="Cleavage" evidence="2">
    <location>
        <begin position="665"/>
        <end position="666"/>
    </location>
</feature>
<feature type="site" description="Cleavage" evidence="4">
    <location>
        <begin position="756"/>
        <end position="757"/>
    </location>
</feature>
<feature type="site" description="Cleavage" evidence="4">
    <location>
        <begin position="914"/>
        <end position="915"/>
    </location>
</feature>
<feature type="modified residue" description="O-(5'-phospho-RNA)-tyrosine" evidence="3">
    <location>
        <position position="694"/>
    </location>
</feature>
<gene>
    <name type="primary">ORF1</name>
</gene>
<organism>
    <name type="scientific">Human astrovirus-8</name>
    <name type="common">HAstV-8</name>
    <dbReference type="NCBI Taxonomy" id="43358"/>
    <lineage>
        <taxon>Viruses</taxon>
        <taxon>Riboviria</taxon>
        <taxon>Orthornavirae</taxon>
        <taxon>Pisuviricota</taxon>
        <taxon>Stelpaviricetes</taxon>
        <taxon>Stellavirales</taxon>
        <taxon>Astroviridae</taxon>
        <taxon>Mamastrovirus</taxon>
        <taxon>Mamastrovirus 1</taxon>
    </lineage>
</organism>
<organismHost>
    <name type="scientific">Homo sapiens</name>
    <name type="common">Human</name>
    <dbReference type="NCBI Taxonomy" id="9606"/>
</organismHost>